<feature type="chain" id="PRO_1000064363" description="UPF0231 protein KPN78578_01240">
    <location>
        <begin position="1"/>
        <end position="120"/>
    </location>
</feature>
<accession>A6T4R4</accession>
<reference key="1">
    <citation type="submission" date="2006-09" db="EMBL/GenBank/DDBJ databases">
        <authorList>
            <consortium name="The Klebsiella pneumonia Genome Sequencing Project"/>
            <person name="McClelland M."/>
            <person name="Sanderson E.K."/>
            <person name="Spieth J."/>
            <person name="Clifton W.S."/>
            <person name="Latreille P."/>
            <person name="Sabo A."/>
            <person name="Pepin K."/>
            <person name="Bhonagiri V."/>
            <person name="Porwollik S."/>
            <person name="Ali J."/>
            <person name="Wilson R.K."/>
        </authorList>
    </citation>
    <scope>NUCLEOTIDE SEQUENCE [LARGE SCALE GENOMIC DNA]</scope>
    <source>
        <strain>ATCC 700721 / MGH 78578</strain>
    </source>
</reference>
<dbReference type="EMBL" id="CP000647">
    <property type="protein sequence ID" value="ABR75585.1"/>
    <property type="molecule type" value="Genomic_DNA"/>
</dbReference>
<dbReference type="STRING" id="272620.KPN_00125"/>
<dbReference type="jPOST" id="A6T4R4"/>
<dbReference type="PaxDb" id="272620-KPN_00125"/>
<dbReference type="EnsemblBacteria" id="ABR75585">
    <property type="protein sequence ID" value="ABR75585"/>
    <property type="gene ID" value="KPN_00125"/>
</dbReference>
<dbReference type="KEGG" id="kpn:KPN_00125"/>
<dbReference type="HOGENOM" id="CLU_139226_0_0_6"/>
<dbReference type="Proteomes" id="UP000000265">
    <property type="component" value="Chromosome"/>
</dbReference>
<dbReference type="HAMAP" id="MF_01053">
    <property type="entry name" value="UPF0231"/>
    <property type="match status" value="1"/>
</dbReference>
<dbReference type="InterPro" id="IPR008249">
    <property type="entry name" value="UPF0231"/>
</dbReference>
<dbReference type="NCBIfam" id="NF003574">
    <property type="entry name" value="PRK05248.1-1"/>
    <property type="match status" value="1"/>
</dbReference>
<dbReference type="NCBIfam" id="NF003576">
    <property type="entry name" value="PRK05248.1-3"/>
    <property type="match status" value="1"/>
</dbReference>
<dbReference type="Pfam" id="PF06062">
    <property type="entry name" value="UPF0231"/>
    <property type="match status" value="1"/>
</dbReference>
<dbReference type="PIRSF" id="PIRSF006287">
    <property type="entry name" value="UCP006287"/>
    <property type="match status" value="1"/>
</dbReference>
<evidence type="ECO:0000255" key="1">
    <source>
        <dbReference type="HAMAP-Rule" id="MF_01053"/>
    </source>
</evidence>
<organism>
    <name type="scientific">Klebsiella pneumoniae subsp. pneumoniae (strain ATCC 700721 / MGH 78578)</name>
    <dbReference type="NCBI Taxonomy" id="272620"/>
    <lineage>
        <taxon>Bacteria</taxon>
        <taxon>Pseudomonadati</taxon>
        <taxon>Pseudomonadota</taxon>
        <taxon>Gammaproteobacteria</taxon>
        <taxon>Enterobacterales</taxon>
        <taxon>Enterobacteriaceae</taxon>
        <taxon>Klebsiella/Raoultella group</taxon>
        <taxon>Klebsiella</taxon>
        <taxon>Klebsiella pneumoniae complex</taxon>
    </lineage>
</organism>
<comment type="similarity">
    <text evidence="1">Belongs to the UPF0231 family.</text>
</comment>
<sequence length="120" mass="13991">MDYEFLRDITGVVKVRMSMDHEAIGHWFNEEVKGNLALLDEVEQAARTVKGSERSWQRAGHEYTLWLDGEEVMIRANQLEFSGDEIEEGMSYYDEESLSLCGVEDFLQVVAAYREFMQQR</sequence>
<name>Y124_KLEP7</name>
<gene>
    <name type="ordered locus">KPN78578_01240</name>
    <name type="ORF">KPN_00125</name>
</gene>
<proteinExistence type="inferred from homology"/>
<protein>
    <recommendedName>
        <fullName evidence="1">UPF0231 protein KPN78578_01240</fullName>
    </recommendedName>
</protein>